<accession>B5Z0Y4</accession>
<proteinExistence type="inferred from homology"/>
<sequence>MHNQAPIQRRKSTRIYVGNVPIGDGAPIAVQSMTNTRTTDVEATVNQIKALERVGADIVRVSVPTMDAAEAFKLIKQQVNVPLVADIHFDYRIALKVAEYGVDCLRINPGNIGNEERIRMVVDCARDKNIPIRIGVNAGSLEKDLQEKYGEPTPQALLESAMRHVDHLDRLNFDQFKVSVKASDVFLAVESYRLLAKQIDQPLHLGITEAGGARSGAVKSAIGLGLLLSEGIGDTLRVSLAADPVEEIKVGFDILKSLRIRSRGINFIACPTCSRQEFDVIGTVNALEQRLEDIITPMDVSIIGCVVNGPGEALVSTLGVTGGNKKSGLYEDGVRKDRLDNNDMIDQLEARIRAKASQLDEARRIDVQQVEK</sequence>
<evidence type="ECO:0000255" key="1">
    <source>
        <dbReference type="HAMAP-Rule" id="MF_00159"/>
    </source>
</evidence>
<feature type="chain" id="PRO_1000097157" description="4-hydroxy-3-methylbut-2-en-1-yl diphosphate synthase (flavodoxin)">
    <location>
        <begin position="1"/>
        <end position="372"/>
    </location>
</feature>
<feature type="binding site" evidence="1">
    <location>
        <position position="270"/>
    </location>
    <ligand>
        <name>[4Fe-4S] cluster</name>
        <dbReference type="ChEBI" id="CHEBI:49883"/>
    </ligand>
</feature>
<feature type="binding site" evidence="1">
    <location>
        <position position="273"/>
    </location>
    <ligand>
        <name>[4Fe-4S] cluster</name>
        <dbReference type="ChEBI" id="CHEBI:49883"/>
    </ligand>
</feature>
<feature type="binding site" evidence="1">
    <location>
        <position position="305"/>
    </location>
    <ligand>
        <name>[4Fe-4S] cluster</name>
        <dbReference type="ChEBI" id="CHEBI:49883"/>
    </ligand>
</feature>
<feature type="binding site" evidence="1">
    <location>
        <position position="312"/>
    </location>
    <ligand>
        <name>[4Fe-4S] cluster</name>
        <dbReference type="ChEBI" id="CHEBI:49883"/>
    </ligand>
</feature>
<dbReference type="EC" id="1.17.7.3" evidence="1"/>
<dbReference type="EMBL" id="CP001164">
    <property type="protein sequence ID" value="ACI36325.1"/>
    <property type="molecule type" value="Genomic_DNA"/>
</dbReference>
<dbReference type="RefSeq" id="WP_000551807.1">
    <property type="nucleotide sequence ID" value="NC_011353.1"/>
</dbReference>
<dbReference type="SMR" id="B5Z0Y4"/>
<dbReference type="GeneID" id="86947404"/>
<dbReference type="KEGG" id="ecf:ECH74115_3740"/>
<dbReference type="HOGENOM" id="CLU_042258_0_0_6"/>
<dbReference type="UniPathway" id="UPA00056">
    <property type="reaction ID" value="UER00096"/>
</dbReference>
<dbReference type="GO" id="GO:0051539">
    <property type="term" value="F:4 iron, 4 sulfur cluster binding"/>
    <property type="evidence" value="ECO:0007669"/>
    <property type="project" value="UniProtKB-UniRule"/>
</dbReference>
<dbReference type="GO" id="GO:0046429">
    <property type="term" value="F:4-hydroxy-3-methylbut-2-en-1-yl diphosphate synthase activity (ferredoxin)"/>
    <property type="evidence" value="ECO:0007669"/>
    <property type="project" value="UniProtKB-UniRule"/>
</dbReference>
<dbReference type="GO" id="GO:0141197">
    <property type="term" value="F:4-hydroxy-3-methylbut-2-enyl-diphosphate synthase activity (flavodoxin)"/>
    <property type="evidence" value="ECO:0007669"/>
    <property type="project" value="UniProtKB-EC"/>
</dbReference>
<dbReference type="GO" id="GO:0005506">
    <property type="term" value="F:iron ion binding"/>
    <property type="evidence" value="ECO:0007669"/>
    <property type="project" value="InterPro"/>
</dbReference>
<dbReference type="GO" id="GO:0019288">
    <property type="term" value="P:isopentenyl diphosphate biosynthetic process, methylerythritol 4-phosphate pathway"/>
    <property type="evidence" value="ECO:0007669"/>
    <property type="project" value="UniProtKB-UniRule"/>
</dbReference>
<dbReference type="GO" id="GO:0016114">
    <property type="term" value="P:terpenoid biosynthetic process"/>
    <property type="evidence" value="ECO:0007669"/>
    <property type="project" value="InterPro"/>
</dbReference>
<dbReference type="FunFam" id="3.20.20.20:FF:000001">
    <property type="entry name" value="4-hydroxy-3-methylbut-2-en-1-yl diphosphate synthase (flavodoxin)"/>
    <property type="match status" value="1"/>
</dbReference>
<dbReference type="FunFam" id="3.30.413.10:FF:000002">
    <property type="entry name" value="4-hydroxy-3-methylbut-2-en-1-yl diphosphate synthase (flavodoxin)"/>
    <property type="match status" value="1"/>
</dbReference>
<dbReference type="Gene3D" id="3.20.20.20">
    <property type="entry name" value="Dihydropteroate synthase-like"/>
    <property type="match status" value="1"/>
</dbReference>
<dbReference type="Gene3D" id="3.30.413.10">
    <property type="entry name" value="Sulfite Reductase Hemoprotein, domain 1"/>
    <property type="match status" value="1"/>
</dbReference>
<dbReference type="HAMAP" id="MF_00159">
    <property type="entry name" value="IspG"/>
    <property type="match status" value="1"/>
</dbReference>
<dbReference type="InterPro" id="IPR011005">
    <property type="entry name" value="Dihydropteroate_synth-like_sf"/>
</dbReference>
<dbReference type="InterPro" id="IPR016425">
    <property type="entry name" value="IspG_bac"/>
</dbReference>
<dbReference type="InterPro" id="IPR004588">
    <property type="entry name" value="IspG_bac-typ"/>
</dbReference>
<dbReference type="InterPro" id="IPR045854">
    <property type="entry name" value="NO2/SO3_Rdtase_4Fe4S_sf"/>
</dbReference>
<dbReference type="NCBIfam" id="TIGR00612">
    <property type="entry name" value="ispG_gcpE"/>
    <property type="match status" value="1"/>
</dbReference>
<dbReference type="NCBIfam" id="NF001540">
    <property type="entry name" value="PRK00366.1"/>
    <property type="match status" value="1"/>
</dbReference>
<dbReference type="PANTHER" id="PTHR30454">
    <property type="entry name" value="4-HYDROXY-3-METHYLBUT-2-EN-1-YL DIPHOSPHATE SYNTHASE"/>
    <property type="match status" value="1"/>
</dbReference>
<dbReference type="PANTHER" id="PTHR30454:SF0">
    <property type="entry name" value="4-HYDROXY-3-METHYLBUT-2-EN-1-YL DIPHOSPHATE SYNTHASE (FERREDOXIN), CHLOROPLASTIC"/>
    <property type="match status" value="1"/>
</dbReference>
<dbReference type="Pfam" id="PF04551">
    <property type="entry name" value="GcpE"/>
    <property type="match status" value="1"/>
</dbReference>
<dbReference type="PIRSF" id="PIRSF004640">
    <property type="entry name" value="IspG"/>
    <property type="match status" value="1"/>
</dbReference>
<dbReference type="SUPFAM" id="SSF51717">
    <property type="entry name" value="Dihydropteroate synthetase-like"/>
    <property type="match status" value="1"/>
</dbReference>
<dbReference type="SUPFAM" id="SSF56014">
    <property type="entry name" value="Nitrite and sulphite reductase 4Fe-4S domain-like"/>
    <property type="match status" value="1"/>
</dbReference>
<comment type="function">
    <text evidence="1">Converts 2C-methyl-D-erythritol 2,4-cyclodiphosphate (ME-2,4cPP) into 1-hydroxy-2-methyl-2-(E)-butenyl 4-diphosphate.</text>
</comment>
<comment type="catalytic activity">
    <reaction evidence="1">
        <text>(2E)-4-hydroxy-3-methylbut-2-enyl diphosphate + oxidized [flavodoxin] + H2O + 2 H(+) = 2-C-methyl-D-erythritol 2,4-cyclic diphosphate + reduced [flavodoxin]</text>
        <dbReference type="Rhea" id="RHEA:43604"/>
        <dbReference type="Rhea" id="RHEA-COMP:10622"/>
        <dbReference type="Rhea" id="RHEA-COMP:10623"/>
        <dbReference type="ChEBI" id="CHEBI:15377"/>
        <dbReference type="ChEBI" id="CHEBI:15378"/>
        <dbReference type="ChEBI" id="CHEBI:57618"/>
        <dbReference type="ChEBI" id="CHEBI:58210"/>
        <dbReference type="ChEBI" id="CHEBI:58483"/>
        <dbReference type="ChEBI" id="CHEBI:128753"/>
        <dbReference type="EC" id="1.17.7.3"/>
    </reaction>
</comment>
<comment type="cofactor">
    <cofactor evidence="1">
        <name>[4Fe-4S] cluster</name>
        <dbReference type="ChEBI" id="CHEBI:49883"/>
    </cofactor>
    <text evidence="1">Binds 1 [4Fe-4S] cluster.</text>
</comment>
<comment type="pathway">
    <text evidence="1">Isoprenoid biosynthesis; isopentenyl diphosphate biosynthesis via DXP pathway; isopentenyl diphosphate from 1-deoxy-D-xylulose 5-phosphate: step 5/6.</text>
</comment>
<comment type="similarity">
    <text evidence="1">Belongs to the IspG family.</text>
</comment>
<organism>
    <name type="scientific">Escherichia coli O157:H7 (strain EC4115 / EHEC)</name>
    <dbReference type="NCBI Taxonomy" id="444450"/>
    <lineage>
        <taxon>Bacteria</taxon>
        <taxon>Pseudomonadati</taxon>
        <taxon>Pseudomonadota</taxon>
        <taxon>Gammaproteobacteria</taxon>
        <taxon>Enterobacterales</taxon>
        <taxon>Enterobacteriaceae</taxon>
        <taxon>Escherichia</taxon>
    </lineage>
</organism>
<protein>
    <recommendedName>
        <fullName evidence="1">4-hydroxy-3-methylbut-2-en-1-yl diphosphate synthase (flavodoxin)</fullName>
        <ecNumber evidence="1">1.17.7.3</ecNumber>
    </recommendedName>
    <alternativeName>
        <fullName evidence="1">1-hydroxy-2-methyl-2-(E)-butenyl 4-diphosphate synthase</fullName>
    </alternativeName>
</protein>
<gene>
    <name evidence="1" type="primary">ispG</name>
    <name type="ordered locus">ECH74115_3740</name>
</gene>
<name>ISPG_ECO5E</name>
<reference key="1">
    <citation type="journal article" date="2011" name="Proc. Natl. Acad. Sci. U.S.A.">
        <title>Genomic anatomy of Escherichia coli O157:H7 outbreaks.</title>
        <authorList>
            <person name="Eppinger M."/>
            <person name="Mammel M.K."/>
            <person name="Leclerc J.E."/>
            <person name="Ravel J."/>
            <person name="Cebula T.A."/>
        </authorList>
    </citation>
    <scope>NUCLEOTIDE SEQUENCE [LARGE SCALE GENOMIC DNA]</scope>
    <source>
        <strain>EC4115 / EHEC</strain>
    </source>
</reference>
<keyword id="KW-0004">4Fe-4S</keyword>
<keyword id="KW-0408">Iron</keyword>
<keyword id="KW-0411">Iron-sulfur</keyword>
<keyword id="KW-0414">Isoprene biosynthesis</keyword>
<keyword id="KW-0479">Metal-binding</keyword>
<keyword id="KW-0560">Oxidoreductase</keyword>